<evidence type="ECO:0000255" key="1">
    <source>
        <dbReference type="HAMAP-Rule" id="MF_01039"/>
    </source>
</evidence>
<evidence type="ECO:0000256" key="2">
    <source>
        <dbReference type="SAM" id="MobiDB-lite"/>
    </source>
</evidence>
<dbReference type="EC" id="5.4.2.11" evidence="1"/>
<dbReference type="EMBL" id="CP000529">
    <property type="protein sequence ID" value="ABM36244.1"/>
    <property type="molecule type" value="Genomic_DNA"/>
</dbReference>
<dbReference type="RefSeq" id="WP_011800338.1">
    <property type="nucleotide sequence ID" value="NC_008781.1"/>
</dbReference>
<dbReference type="SMR" id="A1VKR6"/>
<dbReference type="STRING" id="365044.Pnap_0927"/>
<dbReference type="KEGG" id="pna:Pnap_0927"/>
<dbReference type="eggNOG" id="COG0588">
    <property type="taxonomic scope" value="Bacteria"/>
</dbReference>
<dbReference type="HOGENOM" id="CLU_033323_1_1_4"/>
<dbReference type="OrthoDB" id="9781415at2"/>
<dbReference type="UniPathway" id="UPA00109">
    <property type="reaction ID" value="UER00186"/>
</dbReference>
<dbReference type="Proteomes" id="UP000000644">
    <property type="component" value="Chromosome"/>
</dbReference>
<dbReference type="GO" id="GO:0004619">
    <property type="term" value="F:phosphoglycerate mutase activity"/>
    <property type="evidence" value="ECO:0007669"/>
    <property type="project" value="UniProtKB-EC"/>
</dbReference>
<dbReference type="GO" id="GO:0006094">
    <property type="term" value="P:gluconeogenesis"/>
    <property type="evidence" value="ECO:0007669"/>
    <property type="project" value="UniProtKB-UniRule"/>
</dbReference>
<dbReference type="GO" id="GO:0006096">
    <property type="term" value="P:glycolytic process"/>
    <property type="evidence" value="ECO:0007669"/>
    <property type="project" value="UniProtKB-UniRule"/>
</dbReference>
<dbReference type="CDD" id="cd07067">
    <property type="entry name" value="HP_PGM_like"/>
    <property type="match status" value="1"/>
</dbReference>
<dbReference type="FunFam" id="3.40.50.1240:FF:000003">
    <property type="entry name" value="2,3-bisphosphoglycerate-dependent phosphoglycerate mutase"/>
    <property type="match status" value="1"/>
</dbReference>
<dbReference type="Gene3D" id="3.40.50.1240">
    <property type="entry name" value="Phosphoglycerate mutase-like"/>
    <property type="match status" value="1"/>
</dbReference>
<dbReference type="HAMAP" id="MF_01039">
    <property type="entry name" value="PGAM_GpmA"/>
    <property type="match status" value="1"/>
</dbReference>
<dbReference type="InterPro" id="IPR013078">
    <property type="entry name" value="His_Pase_superF_clade-1"/>
</dbReference>
<dbReference type="InterPro" id="IPR029033">
    <property type="entry name" value="His_PPase_superfam"/>
</dbReference>
<dbReference type="InterPro" id="IPR001345">
    <property type="entry name" value="PG/BPGM_mutase_AS"/>
</dbReference>
<dbReference type="InterPro" id="IPR005952">
    <property type="entry name" value="Phosphogly_mut1"/>
</dbReference>
<dbReference type="NCBIfam" id="TIGR01258">
    <property type="entry name" value="pgm_1"/>
    <property type="match status" value="1"/>
</dbReference>
<dbReference type="NCBIfam" id="NF010713">
    <property type="entry name" value="PRK14115.1"/>
    <property type="match status" value="1"/>
</dbReference>
<dbReference type="PANTHER" id="PTHR11931">
    <property type="entry name" value="PHOSPHOGLYCERATE MUTASE"/>
    <property type="match status" value="1"/>
</dbReference>
<dbReference type="Pfam" id="PF00300">
    <property type="entry name" value="His_Phos_1"/>
    <property type="match status" value="2"/>
</dbReference>
<dbReference type="PIRSF" id="PIRSF000709">
    <property type="entry name" value="6PFK_2-Ptase"/>
    <property type="match status" value="1"/>
</dbReference>
<dbReference type="SMART" id="SM00855">
    <property type="entry name" value="PGAM"/>
    <property type="match status" value="1"/>
</dbReference>
<dbReference type="SUPFAM" id="SSF53254">
    <property type="entry name" value="Phosphoglycerate mutase-like"/>
    <property type="match status" value="1"/>
</dbReference>
<dbReference type="PROSITE" id="PS00175">
    <property type="entry name" value="PG_MUTASE"/>
    <property type="match status" value="1"/>
</dbReference>
<feature type="chain" id="PRO_1000064087" description="2,3-bisphosphoglycerate-dependent phosphoglycerate mutase">
    <location>
        <begin position="1"/>
        <end position="250"/>
    </location>
</feature>
<feature type="region of interest" description="Disordered" evidence="2">
    <location>
        <begin position="116"/>
        <end position="135"/>
    </location>
</feature>
<feature type="active site" description="Tele-phosphohistidine intermediate" evidence="1">
    <location>
        <position position="9"/>
    </location>
</feature>
<feature type="active site" description="Proton donor/acceptor" evidence="1">
    <location>
        <position position="87"/>
    </location>
</feature>
<feature type="binding site" evidence="1">
    <location>
        <begin position="8"/>
        <end position="15"/>
    </location>
    <ligand>
        <name>substrate</name>
    </ligand>
</feature>
<feature type="binding site" evidence="1">
    <location>
        <begin position="21"/>
        <end position="22"/>
    </location>
    <ligand>
        <name>substrate</name>
    </ligand>
</feature>
<feature type="binding site" evidence="1">
    <location>
        <position position="60"/>
    </location>
    <ligand>
        <name>substrate</name>
    </ligand>
</feature>
<feature type="binding site" evidence="1">
    <location>
        <begin position="87"/>
        <end position="90"/>
    </location>
    <ligand>
        <name>substrate</name>
    </ligand>
</feature>
<feature type="binding site" evidence="1">
    <location>
        <position position="98"/>
    </location>
    <ligand>
        <name>substrate</name>
    </ligand>
</feature>
<feature type="binding site" evidence="1">
    <location>
        <begin position="114"/>
        <end position="115"/>
    </location>
    <ligand>
        <name>substrate</name>
    </ligand>
</feature>
<feature type="binding site" evidence="1">
    <location>
        <begin position="183"/>
        <end position="184"/>
    </location>
    <ligand>
        <name>substrate</name>
    </ligand>
</feature>
<feature type="site" description="Transition state stabilizer" evidence="1">
    <location>
        <position position="182"/>
    </location>
</feature>
<gene>
    <name evidence="1" type="primary">gpmA</name>
    <name type="ordered locus">Pnap_0927</name>
</gene>
<keyword id="KW-0312">Gluconeogenesis</keyword>
<keyword id="KW-0324">Glycolysis</keyword>
<keyword id="KW-0413">Isomerase</keyword>
<keyword id="KW-1185">Reference proteome</keyword>
<comment type="function">
    <text evidence="1">Catalyzes the interconversion of 2-phosphoglycerate and 3-phosphoglycerate.</text>
</comment>
<comment type="catalytic activity">
    <reaction evidence="1">
        <text>(2R)-2-phosphoglycerate = (2R)-3-phosphoglycerate</text>
        <dbReference type="Rhea" id="RHEA:15901"/>
        <dbReference type="ChEBI" id="CHEBI:58272"/>
        <dbReference type="ChEBI" id="CHEBI:58289"/>
        <dbReference type="EC" id="5.4.2.11"/>
    </reaction>
</comment>
<comment type="pathway">
    <text evidence="1">Carbohydrate degradation; glycolysis; pyruvate from D-glyceraldehyde 3-phosphate: step 3/5.</text>
</comment>
<comment type="subunit">
    <text evidence="1">Homodimer.</text>
</comment>
<comment type="similarity">
    <text evidence="1">Belongs to the phosphoglycerate mutase family. BPG-dependent PGAM subfamily.</text>
</comment>
<name>GPMA_POLNA</name>
<sequence length="250" mass="27917">MYKLVLIRHGESTWNLDNRFTGWTDVDLTETGIAQAKNSGQLLKAEGYDFDLAYTSVLKRATRTLWHVLDEMDQTWLPVEHSWRLNERHYGDLQGLNKAETAKKFGDEQVLVWRRSYDTPPPPLAANDPRSERSDRRYANLLPGQVPLTECLKDTVERVLPFWNEAMAPAIKAGKRIVVAAHGNSIRALVKYLDNISDSDIVGLNIPNGIPLVYELDENLKPLRSYYLGDSEAAAKAAAAVGAQGKAVAA</sequence>
<accession>A1VKR6</accession>
<proteinExistence type="inferred from homology"/>
<organism>
    <name type="scientific">Polaromonas naphthalenivorans (strain CJ2)</name>
    <dbReference type="NCBI Taxonomy" id="365044"/>
    <lineage>
        <taxon>Bacteria</taxon>
        <taxon>Pseudomonadati</taxon>
        <taxon>Pseudomonadota</taxon>
        <taxon>Betaproteobacteria</taxon>
        <taxon>Burkholderiales</taxon>
        <taxon>Comamonadaceae</taxon>
        <taxon>Polaromonas</taxon>
    </lineage>
</organism>
<reference key="1">
    <citation type="journal article" date="2009" name="Environ. Microbiol.">
        <title>The genome of Polaromonas naphthalenivorans strain CJ2, isolated from coal tar-contaminated sediment, reveals physiological and metabolic versatility and evolution through extensive horizontal gene transfer.</title>
        <authorList>
            <person name="Yagi J.M."/>
            <person name="Sims D."/>
            <person name="Brettin T."/>
            <person name="Bruce D."/>
            <person name="Madsen E.L."/>
        </authorList>
    </citation>
    <scope>NUCLEOTIDE SEQUENCE [LARGE SCALE GENOMIC DNA]</scope>
    <source>
        <strain>CJ2</strain>
    </source>
</reference>
<protein>
    <recommendedName>
        <fullName evidence="1">2,3-bisphosphoglycerate-dependent phosphoglycerate mutase</fullName>
        <shortName evidence="1">BPG-dependent PGAM</shortName>
        <shortName evidence="1">PGAM</shortName>
        <shortName evidence="1">Phosphoglyceromutase</shortName>
        <shortName evidence="1">dPGM</shortName>
        <ecNumber evidence="1">5.4.2.11</ecNumber>
    </recommendedName>
</protein>